<gene>
    <name type="primary">PUB47</name>
    <name type="ordered locus">At5g18330</name>
    <name type="ORF">F20L16.50</name>
</gene>
<protein>
    <recommendedName>
        <fullName>Putative U-box domain-containing protein 47</fullName>
        <ecNumber>2.3.2.27</ecNumber>
    </recommendedName>
    <alternativeName>
        <fullName>Plant U-box protein 47</fullName>
    </alternativeName>
    <alternativeName>
        <fullName evidence="2">RING-type E3 ubiquitin transferase PUB47</fullName>
    </alternativeName>
</protein>
<feature type="chain" id="PRO_0000322187" description="Putative U-box domain-containing protein 47">
    <location>
        <begin position="1"/>
        <end position="445"/>
    </location>
</feature>
<feature type="domain" description="U-box">
    <location>
        <begin position="64"/>
        <end position="137"/>
    </location>
</feature>
<accession>Q3E9F6</accession>
<name>PUB47_ARATH</name>
<comment type="function">
    <text evidence="1">Functions as an E3 ubiquitin ligase.</text>
</comment>
<comment type="catalytic activity">
    <reaction>
        <text>S-ubiquitinyl-[E2 ubiquitin-conjugating enzyme]-L-cysteine + [acceptor protein]-L-lysine = [E2 ubiquitin-conjugating enzyme]-L-cysteine + N(6)-ubiquitinyl-[acceptor protein]-L-lysine.</text>
        <dbReference type="EC" id="2.3.2.27"/>
    </reaction>
</comment>
<comment type="pathway">
    <text>Protein modification; protein ubiquitination.</text>
</comment>
<evidence type="ECO:0000250" key="1"/>
<evidence type="ECO:0000305" key="2"/>
<sequence>MADSTADESTNADTLWRELHKVLPEIWYDGGGKDHCEIDEAIRILTCLRKIESKNPESDISPVEVPKEFICTLSNKIMIEPMLIASGQTFEKSYILEWLKHERTCPRTKQVLYHRFMIPNHLINEVIKEWCLIHNFDRPKTSDEVIDLFTGDLESLLQRISSPSSVEDQTEAAKELALKAKRFSSVCVYFVAKIPDSITRLLTPLSISEDSNPEFLENIVTALHIFSTSEKNKTLVAENPLVLPLLAKYMKQGTVLTRIHSAATVNSLSYTDSNKIIIGNSEVLKALIHVIEEGDSLATSEAFSALSNLCPVKEISEKAVSEGLIRAAIKKIKAGSNVSMLLSLLAFVSTQNHQTTEEMDNLGLIYDLFSILRNSNSLVNDENAVVIVYNICKSYKALQNVVLREEKRDVVLEEENKHGTFTRLENQEAGRATSLAKRILEWILR</sequence>
<dbReference type="EC" id="2.3.2.27"/>
<dbReference type="EMBL" id="AC051626">
    <property type="status" value="NOT_ANNOTATED_CDS"/>
    <property type="molecule type" value="Genomic_DNA"/>
</dbReference>
<dbReference type="EMBL" id="CP002688">
    <property type="protein sequence ID" value="AED92540.1"/>
    <property type="molecule type" value="Genomic_DNA"/>
</dbReference>
<dbReference type="RefSeq" id="NP_197334.1">
    <property type="nucleotide sequence ID" value="NM_121838.1"/>
</dbReference>
<dbReference type="SMR" id="Q3E9F6"/>
<dbReference type="STRING" id="3702.Q3E9F6"/>
<dbReference type="iPTMnet" id="Q3E9F6"/>
<dbReference type="PaxDb" id="3702-AT5G18330.1"/>
<dbReference type="ProteomicsDB" id="226111"/>
<dbReference type="EnsemblPlants" id="AT5G18330.1">
    <property type="protein sequence ID" value="AT5G18330.1"/>
    <property type="gene ID" value="AT5G18330"/>
</dbReference>
<dbReference type="GeneID" id="831951"/>
<dbReference type="Gramene" id="AT5G18330.1">
    <property type="protein sequence ID" value="AT5G18330.1"/>
    <property type="gene ID" value="AT5G18330"/>
</dbReference>
<dbReference type="KEGG" id="ath:AT5G18330"/>
<dbReference type="Araport" id="AT5G18330"/>
<dbReference type="TAIR" id="AT5G18330">
    <property type="gene designation" value="PUB47"/>
</dbReference>
<dbReference type="eggNOG" id="KOG0167">
    <property type="taxonomic scope" value="Eukaryota"/>
</dbReference>
<dbReference type="HOGENOM" id="CLU_006348_0_0_1"/>
<dbReference type="InParanoid" id="Q3E9F6"/>
<dbReference type="OMA" id="EIWYDGG"/>
<dbReference type="PhylomeDB" id="Q3E9F6"/>
<dbReference type="UniPathway" id="UPA00143"/>
<dbReference type="PRO" id="PR:Q3E9F6"/>
<dbReference type="Proteomes" id="UP000006548">
    <property type="component" value="Chromosome 5"/>
</dbReference>
<dbReference type="ExpressionAtlas" id="Q3E9F6">
    <property type="expression patterns" value="baseline and differential"/>
</dbReference>
<dbReference type="GO" id="GO:0004842">
    <property type="term" value="F:ubiquitin-protein transferase activity"/>
    <property type="evidence" value="ECO:0000314"/>
    <property type="project" value="TAIR"/>
</dbReference>
<dbReference type="GO" id="GO:0016567">
    <property type="term" value="P:protein ubiquitination"/>
    <property type="evidence" value="ECO:0007669"/>
    <property type="project" value="UniProtKB-UniPathway"/>
</dbReference>
<dbReference type="CDD" id="cd16664">
    <property type="entry name" value="RING-Ubox_PUB"/>
    <property type="match status" value="1"/>
</dbReference>
<dbReference type="Gene3D" id="1.25.10.10">
    <property type="entry name" value="Leucine-rich Repeat Variant"/>
    <property type="match status" value="1"/>
</dbReference>
<dbReference type="Gene3D" id="3.30.40.10">
    <property type="entry name" value="Zinc/RING finger domain, C3HC4 (zinc finger)"/>
    <property type="match status" value="1"/>
</dbReference>
<dbReference type="InterPro" id="IPR011989">
    <property type="entry name" value="ARM-like"/>
</dbReference>
<dbReference type="InterPro" id="IPR016024">
    <property type="entry name" value="ARM-type_fold"/>
</dbReference>
<dbReference type="InterPro" id="IPR045210">
    <property type="entry name" value="RING-Ubox_PUB"/>
</dbReference>
<dbReference type="InterPro" id="IPR003613">
    <property type="entry name" value="Ubox_domain"/>
</dbReference>
<dbReference type="InterPro" id="IPR013083">
    <property type="entry name" value="Znf_RING/FYVE/PHD"/>
</dbReference>
<dbReference type="PANTHER" id="PTHR23315">
    <property type="entry name" value="U BOX DOMAIN-CONTAINING"/>
    <property type="match status" value="1"/>
</dbReference>
<dbReference type="PANTHER" id="PTHR23315:SF265">
    <property type="entry name" value="U-BOX DOMAIN-CONTAINING PROTEIN 46-RELATED"/>
    <property type="match status" value="1"/>
</dbReference>
<dbReference type="Pfam" id="PF04564">
    <property type="entry name" value="U-box"/>
    <property type="match status" value="1"/>
</dbReference>
<dbReference type="SMART" id="SM00504">
    <property type="entry name" value="Ubox"/>
    <property type="match status" value="1"/>
</dbReference>
<dbReference type="SUPFAM" id="SSF48371">
    <property type="entry name" value="ARM repeat"/>
    <property type="match status" value="1"/>
</dbReference>
<dbReference type="SUPFAM" id="SSF57850">
    <property type="entry name" value="RING/U-box"/>
    <property type="match status" value="1"/>
</dbReference>
<dbReference type="PROSITE" id="PS51698">
    <property type="entry name" value="U_BOX"/>
    <property type="match status" value="1"/>
</dbReference>
<reference key="1">
    <citation type="journal article" date="2000" name="Nature">
        <title>Sequence and analysis of chromosome 5 of the plant Arabidopsis thaliana.</title>
        <authorList>
            <person name="Tabata S."/>
            <person name="Kaneko T."/>
            <person name="Nakamura Y."/>
            <person name="Kotani H."/>
            <person name="Kato T."/>
            <person name="Asamizu E."/>
            <person name="Miyajima N."/>
            <person name="Sasamoto S."/>
            <person name="Kimura T."/>
            <person name="Hosouchi T."/>
            <person name="Kawashima K."/>
            <person name="Kohara M."/>
            <person name="Matsumoto M."/>
            <person name="Matsuno A."/>
            <person name="Muraki A."/>
            <person name="Nakayama S."/>
            <person name="Nakazaki N."/>
            <person name="Naruo K."/>
            <person name="Okumura S."/>
            <person name="Shinpo S."/>
            <person name="Takeuchi C."/>
            <person name="Wada T."/>
            <person name="Watanabe A."/>
            <person name="Yamada M."/>
            <person name="Yasuda M."/>
            <person name="Sato S."/>
            <person name="de la Bastide M."/>
            <person name="Huang E."/>
            <person name="Spiegel L."/>
            <person name="Gnoj L."/>
            <person name="O'Shaughnessy A."/>
            <person name="Preston R."/>
            <person name="Habermann K."/>
            <person name="Murray J."/>
            <person name="Johnson D."/>
            <person name="Rohlfing T."/>
            <person name="Nelson J."/>
            <person name="Stoneking T."/>
            <person name="Pepin K."/>
            <person name="Spieth J."/>
            <person name="Sekhon M."/>
            <person name="Armstrong J."/>
            <person name="Becker M."/>
            <person name="Belter E."/>
            <person name="Cordum H."/>
            <person name="Cordes M."/>
            <person name="Courtney L."/>
            <person name="Courtney W."/>
            <person name="Dante M."/>
            <person name="Du H."/>
            <person name="Edwards J."/>
            <person name="Fryman J."/>
            <person name="Haakensen B."/>
            <person name="Lamar E."/>
            <person name="Latreille P."/>
            <person name="Leonard S."/>
            <person name="Meyer R."/>
            <person name="Mulvaney E."/>
            <person name="Ozersky P."/>
            <person name="Riley A."/>
            <person name="Strowmatt C."/>
            <person name="Wagner-McPherson C."/>
            <person name="Wollam A."/>
            <person name="Yoakum M."/>
            <person name="Bell M."/>
            <person name="Dedhia N."/>
            <person name="Parnell L."/>
            <person name="Shah R."/>
            <person name="Rodriguez M."/>
            <person name="Hoon See L."/>
            <person name="Vil D."/>
            <person name="Baker J."/>
            <person name="Kirchoff K."/>
            <person name="Toth K."/>
            <person name="King L."/>
            <person name="Bahret A."/>
            <person name="Miller B."/>
            <person name="Marra M.A."/>
            <person name="Martienssen R."/>
            <person name="McCombie W.R."/>
            <person name="Wilson R.K."/>
            <person name="Murphy G."/>
            <person name="Bancroft I."/>
            <person name="Volckaert G."/>
            <person name="Wambutt R."/>
            <person name="Duesterhoeft A."/>
            <person name="Stiekema W."/>
            <person name="Pohl T."/>
            <person name="Entian K.-D."/>
            <person name="Terryn N."/>
            <person name="Hartley N."/>
            <person name="Bent E."/>
            <person name="Johnson S."/>
            <person name="Langham S.-A."/>
            <person name="McCullagh B."/>
            <person name="Robben J."/>
            <person name="Grymonprez B."/>
            <person name="Zimmermann W."/>
            <person name="Ramsperger U."/>
            <person name="Wedler H."/>
            <person name="Balke K."/>
            <person name="Wedler E."/>
            <person name="Peters S."/>
            <person name="van Staveren M."/>
            <person name="Dirkse W."/>
            <person name="Mooijman P."/>
            <person name="Klein Lankhorst R."/>
            <person name="Weitzenegger T."/>
            <person name="Bothe G."/>
            <person name="Rose M."/>
            <person name="Hauf J."/>
            <person name="Berneiser S."/>
            <person name="Hempel S."/>
            <person name="Feldpausch M."/>
            <person name="Lamberth S."/>
            <person name="Villarroel R."/>
            <person name="Gielen J."/>
            <person name="Ardiles W."/>
            <person name="Bents O."/>
            <person name="Lemcke K."/>
            <person name="Kolesov G."/>
            <person name="Mayer K.F.X."/>
            <person name="Rudd S."/>
            <person name="Schoof H."/>
            <person name="Schueller C."/>
            <person name="Zaccaria P."/>
            <person name="Mewes H.-W."/>
            <person name="Bevan M."/>
            <person name="Fransz P.F."/>
        </authorList>
    </citation>
    <scope>NUCLEOTIDE SEQUENCE [LARGE SCALE GENOMIC DNA]</scope>
    <source>
        <strain>cv. Columbia</strain>
    </source>
</reference>
<reference key="2">
    <citation type="journal article" date="2017" name="Plant J.">
        <title>Araport11: a complete reannotation of the Arabidopsis thaliana reference genome.</title>
        <authorList>
            <person name="Cheng C.Y."/>
            <person name="Krishnakumar V."/>
            <person name="Chan A.P."/>
            <person name="Thibaud-Nissen F."/>
            <person name="Schobel S."/>
            <person name="Town C.D."/>
        </authorList>
    </citation>
    <scope>GENOME REANNOTATION</scope>
    <source>
        <strain>cv. Columbia</strain>
    </source>
</reference>
<reference key="3">
    <citation type="journal article" date="2004" name="Plant Physiol.">
        <title>A large complement of the predicted Arabidopsis ARM repeat proteins are members of the U-box E3 ubiquitin ligase family.</title>
        <authorList>
            <person name="Mudgil Y."/>
            <person name="Shiu S.-H."/>
            <person name="Stone S.L."/>
            <person name="Salt J.N."/>
            <person name="Goring D.R."/>
        </authorList>
    </citation>
    <scope>GENE FAMILY ORGANIZATION</scope>
</reference>
<organism>
    <name type="scientific">Arabidopsis thaliana</name>
    <name type="common">Mouse-ear cress</name>
    <dbReference type="NCBI Taxonomy" id="3702"/>
    <lineage>
        <taxon>Eukaryota</taxon>
        <taxon>Viridiplantae</taxon>
        <taxon>Streptophyta</taxon>
        <taxon>Embryophyta</taxon>
        <taxon>Tracheophyta</taxon>
        <taxon>Spermatophyta</taxon>
        <taxon>Magnoliopsida</taxon>
        <taxon>eudicotyledons</taxon>
        <taxon>Gunneridae</taxon>
        <taxon>Pentapetalae</taxon>
        <taxon>rosids</taxon>
        <taxon>malvids</taxon>
        <taxon>Brassicales</taxon>
        <taxon>Brassicaceae</taxon>
        <taxon>Camelineae</taxon>
        <taxon>Arabidopsis</taxon>
    </lineage>
</organism>
<keyword id="KW-1185">Reference proteome</keyword>
<keyword id="KW-0808">Transferase</keyword>
<keyword id="KW-0833">Ubl conjugation pathway</keyword>
<proteinExistence type="inferred from homology"/>